<sequence length="43" mass="4780">MSQKLSFFQQNTRNGSGASRTLVIKPPTIQPKPENSISKTFSK</sequence>
<organism>
    <name type="scientific">Dictyostelium discoideum</name>
    <name type="common">Social amoeba</name>
    <dbReference type="NCBI Taxonomy" id="44689"/>
    <lineage>
        <taxon>Eukaryota</taxon>
        <taxon>Amoebozoa</taxon>
        <taxon>Evosea</taxon>
        <taxon>Eumycetozoa</taxon>
        <taxon>Dictyostelia</taxon>
        <taxon>Dictyosteliales</taxon>
        <taxon>Dictyosteliaceae</taxon>
        <taxon>Dictyostelium</taxon>
    </lineage>
</organism>
<dbReference type="EMBL" id="AAFI02000043">
    <property type="protein sequence ID" value="EAL66494.1"/>
    <property type="molecule type" value="Genomic_DNA"/>
</dbReference>
<dbReference type="RefSeq" id="XP_640470.1">
    <property type="nucleotide sequence ID" value="XM_635378.1"/>
</dbReference>
<dbReference type="PaxDb" id="44689-DDB0204259"/>
<dbReference type="EnsemblProtists" id="EAL66494">
    <property type="protein sequence ID" value="EAL66494"/>
    <property type="gene ID" value="DDB_G0281869"/>
</dbReference>
<dbReference type="GeneID" id="8623283"/>
<dbReference type="KEGG" id="ddi:DDB_G0281869"/>
<dbReference type="dictyBase" id="DDB_G0281869"/>
<dbReference type="VEuPathDB" id="AmoebaDB:DDB_G0281869"/>
<dbReference type="HOGENOM" id="CLU_3243265_0_0_1"/>
<dbReference type="InParanoid" id="Q54TB9"/>
<dbReference type="PRO" id="PR:Q54TB9"/>
<dbReference type="Proteomes" id="UP000002195">
    <property type="component" value="Chromosome 3"/>
</dbReference>
<proteinExistence type="predicted"/>
<gene>
    <name type="ORF">DDB_G0281869</name>
</gene>
<accession>Q54TB9</accession>
<reference key="1">
    <citation type="journal article" date="2005" name="Nature">
        <title>The genome of the social amoeba Dictyostelium discoideum.</title>
        <authorList>
            <person name="Eichinger L."/>
            <person name="Pachebat J.A."/>
            <person name="Gloeckner G."/>
            <person name="Rajandream M.A."/>
            <person name="Sucgang R."/>
            <person name="Berriman M."/>
            <person name="Song J."/>
            <person name="Olsen R."/>
            <person name="Szafranski K."/>
            <person name="Xu Q."/>
            <person name="Tunggal B."/>
            <person name="Kummerfeld S."/>
            <person name="Madera M."/>
            <person name="Konfortov B.A."/>
            <person name="Rivero F."/>
            <person name="Bankier A.T."/>
            <person name="Lehmann R."/>
            <person name="Hamlin N."/>
            <person name="Davies R."/>
            <person name="Gaudet P."/>
            <person name="Fey P."/>
            <person name="Pilcher K."/>
            <person name="Chen G."/>
            <person name="Saunders D."/>
            <person name="Sodergren E.J."/>
            <person name="Davis P."/>
            <person name="Kerhornou A."/>
            <person name="Nie X."/>
            <person name="Hall N."/>
            <person name="Anjard C."/>
            <person name="Hemphill L."/>
            <person name="Bason N."/>
            <person name="Farbrother P."/>
            <person name="Desany B."/>
            <person name="Just E."/>
            <person name="Morio T."/>
            <person name="Rost R."/>
            <person name="Churcher C.M."/>
            <person name="Cooper J."/>
            <person name="Haydock S."/>
            <person name="van Driessche N."/>
            <person name="Cronin A."/>
            <person name="Goodhead I."/>
            <person name="Muzny D.M."/>
            <person name="Mourier T."/>
            <person name="Pain A."/>
            <person name="Lu M."/>
            <person name="Harper D."/>
            <person name="Lindsay R."/>
            <person name="Hauser H."/>
            <person name="James K.D."/>
            <person name="Quiles M."/>
            <person name="Madan Babu M."/>
            <person name="Saito T."/>
            <person name="Buchrieser C."/>
            <person name="Wardroper A."/>
            <person name="Felder M."/>
            <person name="Thangavelu M."/>
            <person name="Johnson D."/>
            <person name="Knights A."/>
            <person name="Loulseged H."/>
            <person name="Mungall K.L."/>
            <person name="Oliver K."/>
            <person name="Price C."/>
            <person name="Quail M.A."/>
            <person name="Urushihara H."/>
            <person name="Hernandez J."/>
            <person name="Rabbinowitsch E."/>
            <person name="Steffen D."/>
            <person name="Sanders M."/>
            <person name="Ma J."/>
            <person name="Kohara Y."/>
            <person name="Sharp S."/>
            <person name="Simmonds M.N."/>
            <person name="Spiegler S."/>
            <person name="Tivey A."/>
            <person name="Sugano S."/>
            <person name="White B."/>
            <person name="Walker D."/>
            <person name="Woodward J.R."/>
            <person name="Winckler T."/>
            <person name="Tanaka Y."/>
            <person name="Shaulsky G."/>
            <person name="Schleicher M."/>
            <person name="Weinstock G.M."/>
            <person name="Rosenthal A."/>
            <person name="Cox E.C."/>
            <person name="Chisholm R.L."/>
            <person name="Gibbs R.A."/>
            <person name="Loomis W.F."/>
            <person name="Platzer M."/>
            <person name="Kay R.R."/>
            <person name="Williams J.G."/>
            <person name="Dear P.H."/>
            <person name="Noegel A.A."/>
            <person name="Barrell B.G."/>
            <person name="Kuspa A."/>
        </authorList>
    </citation>
    <scope>NUCLEOTIDE SEQUENCE [LARGE SCALE GENOMIC DNA]</scope>
    <source>
        <strain>AX4</strain>
    </source>
</reference>
<evidence type="ECO:0000256" key="1">
    <source>
        <dbReference type="SAM" id="MobiDB-lite"/>
    </source>
</evidence>
<name>Y4259_DICDI</name>
<keyword id="KW-1185">Reference proteome</keyword>
<protein>
    <recommendedName>
        <fullName>Putative uncharacterized protein DDB_G0281869</fullName>
    </recommendedName>
</protein>
<feature type="chain" id="PRO_0000352409" description="Putative uncharacterized protein DDB_G0281869">
    <location>
        <begin position="1"/>
        <end position="43"/>
    </location>
</feature>
<feature type="region of interest" description="Disordered" evidence="1">
    <location>
        <begin position="1"/>
        <end position="43"/>
    </location>
</feature>
<feature type="compositionally biased region" description="Polar residues" evidence="1">
    <location>
        <begin position="1"/>
        <end position="19"/>
    </location>
</feature>
<feature type="compositionally biased region" description="Polar residues" evidence="1">
    <location>
        <begin position="33"/>
        <end position="43"/>
    </location>
</feature>